<accession>P75870</accession>
<reference key="1">
    <citation type="journal article" date="1996" name="DNA Res.">
        <title>A 718-kb DNA sequence of the Escherichia coli K-12 genome corresponding to the 12.7-28.0 min region on the linkage map.</title>
        <authorList>
            <person name="Oshima T."/>
            <person name="Aiba H."/>
            <person name="Baba T."/>
            <person name="Fujita K."/>
            <person name="Hayashi K."/>
            <person name="Honjo A."/>
            <person name="Ikemoto K."/>
            <person name="Inada T."/>
            <person name="Itoh T."/>
            <person name="Kajihara M."/>
            <person name="Kanai K."/>
            <person name="Kashimoto K."/>
            <person name="Kimura S."/>
            <person name="Kitagawa M."/>
            <person name="Makino K."/>
            <person name="Masuda S."/>
            <person name="Miki T."/>
            <person name="Mizobuchi K."/>
            <person name="Mori H."/>
            <person name="Motomura K."/>
            <person name="Nakamura Y."/>
            <person name="Nashimoto H."/>
            <person name="Nishio Y."/>
            <person name="Saito N."/>
            <person name="Sampei G."/>
            <person name="Seki Y."/>
            <person name="Tagami H."/>
            <person name="Takemoto K."/>
            <person name="Wada C."/>
            <person name="Yamamoto Y."/>
            <person name="Yano M."/>
            <person name="Horiuchi T."/>
        </authorList>
    </citation>
    <scope>NUCLEOTIDE SEQUENCE [LARGE SCALE GENOMIC DNA]</scope>
    <source>
        <strain>K12 / W3110 / ATCC 27325 / DSM 5911</strain>
    </source>
</reference>
<reference key="2">
    <citation type="journal article" date="1997" name="Science">
        <title>The complete genome sequence of Escherichia coli K-12.</title>
        <authorList>
            <person name="Blattner F.R."/>
            <person name="Plunkett G. III"/>
            <person name="Bloch C.A."/>
            <person name="Perna N.T."/>
            <person name="Burland V."/>
            <person name="Riley M."/>
            <person name="Collado-Vides J."/>
            <person name="Glasner J.D."/>
            <person name="Rode C.K."/>
            <person name="Mayhew G.F."/>
            <person name="Gregor J."/>
            <person name="Davis N.W."/>
            <person name="Kirkpatrick H.A."/>
            <person name="Goeden M.A."/>
            <person name="Rose D.J."/>
            <person name="Mau B."/>
            <person name="Shao Y."/>
        </authorList>
    </citation>
    <scope>NUCLEOTIDE SEQUENCE [LARGE SCALE GENOMIC DNA]</scope>
    <source>
        <strain>K12 / MG1655 / ATCC 47076</strain>
    </source>
</reference>
<reference key="3">
    <citation type="journal article" date="2006" name="Mol. Syst. Biol.">
        <title>Highly accurate genome sequences of Escherichia coli K-12 strains MG1655 and W3110.</title>
        <authorList>
            <person name="Hayashi K."/>
            <person name="Morooka N."/>
            <person name="Yamamoto Y."/>
            <person name="Fujita K."/>
            <person name="Isono K."/>
            <person name="Choi S."/>
            <person name="Ohtsubo E."/>
            <person name="Baba T."/>
            <person name="Wanner B.L."/>
            <person name="Mori H."/>
            <person name="Horiuchi T."/>
        </authorList>
    </citation>
    <scope>NUCLEOTIDE SEQUENCE [LARGE SCALE GENOMIC DNA]</scope>
    <source>
        <strain>K12 / W3110 / ATCC 27325 / DSM 5911</strain>
    </source>
</reference>
<reference key="4">
    <citation type="journal article" date="2005" name="Science">
        <title>Global topology analysis of the Escherichia coli inner membrane proteome.</title>
        <authorList>
            <person name="Daley D.O."/>
            <person name="Rapp M."/>
            <person name="Granseth E."/>
            <person name="Melen K."/>
            <person name="Drew D."/>
            <person name="von Heijne G."/>
        </authorList>
    </citation>
    <scope>TOPOLOGY [LARGE SCALE ANALYSIS]</scope>
    <source>
        <strain>K12 / MG1655 / ATCC 47076</strain>
    </source>
</reference>
<comment type="subcellular location">
    <subcellularLocation>
        <location>Cell inner membrane</location>
        <topology>Multi-pass membrane protein</topology>
    </subcellularLocation>
</comment>
<comment type="similarity">
    <text evidence="2">Belongs to the YccS/YhfK family.</text>
</comment>
<sequence>MLSPLLKRYTWNSAWLYYARIFIALCGTTAFPWWLGDVKLTIPLTLGMVAAALTDLDDRLAGRLRNLIITLFCFFIASASVELLFPWPWLFAIGLTLSTSGFILLGGLGQRYATIAFGALLIAIYTMLGTSLYEHWYQQPMYLLAGAVWYNVLTLIGHLLFPVRPLQDNLARCYEQLARYLELKSRMFDPDIEDQSQAPLYDLALANGLLMATLNQTKLSLLTRLRGDRGQRGTRRTLHYYFVAQDIHERASSSHIQYQTLREHFRHSDVLFRFQRLMSMQGQACQQLSRCILLRQPYQHDPHFERAFTHIDAALERMRDNGAPADLLKTLGFLLNNLRAIDAQLATIESEQAQALPHNNDENELADDSPHGLSDIWLRLSRHFTPESALFRHAVRMSLVLCFGYAIIQITGMHHGYWILLTSLFVCQPNYNATRHRLKLRIIGTLVGIAIGIPVLWFVPSLEGQLVLLVITGVLFFAFRNVQYAHATMFITLLVLLCFNLLGEGFEVALPRVIDTLIGCAIAWAAVSYIWPDWQFRNLPRMLERATEANCRYLDAILEQYHQGRDNRLAYRIARRDAHNRDAELASVVSNMSSEPNVTPQIREAAFRLLCLNHTFTSYISALGAHREQLTNPEILAFLDDAVCYVDDALHHQPADEERVNEALASLKQRMQQLEPRADSKEPLVVQQVGLLIALLPEIGRLQRQITQVPQETPVSA</sequence>
<feature type="chain" id="PRO_0000168793" description="Inner membrane protein YccS">
    <location>
        <begin position="1"/>
        <end position="717"/>
    </location>
</feature>
<feature type="topological domain" description="Periplasmic" evidence="1">
    <location>
        <begin position="1"/>
        <end position="10"/>
    </location>
</feature>
<feature type="transmembrane region" description="Helical" evidence="1">
    <location>
        <begin position="11"/>
        <end position="31"/>
    </location>
</feature>
<feature type="topological domain" description="Cytoplasmic" evidence="1">
    <location>
        <position position="32"/>
    </location>
</feature>
<feature type="transmembrane region" description="Helical" evidence="1">
    <location>
        <begin position="33"/>
        <end position="53"/>
    </location>
</feature>
<feature type="topological domain" description="Periplasmic" evidence="1">
    <location>
        <begin position="54"/>
        <end position="66"/>
    </location>
</feature>
<feature type="transmembrane region" description="Helical" evidence="1">
    <location>
        <begin position="67"/>
        <end position="87"/>
    </location>
</feature>
<feature type="topological domain" description="Cytoplasmic" evidence="1">
    <location>
        <position position="88"/>
    </location>
</feature>
<feature type="transmembrane region" description="Helical" evidence="1">
    <location>
        <begin position="89"/>
        <end position="109"/>
    </location>
</feature>
<feature type="topological domain" description="Periplasmic" evidence="1">
    <location>
        <begin position="110"/>
        <end position="112"/>
    </location>
</feature>
<feature type="transmembrane region" description="Helical" evidence="1">
    <location>
        <begin position="113"/>
        <end position="133"/>
    </location>
</feature>
<feature type="topological domain" description="Cytoplasmic" evidence="1">
    <location>
        <begin position="134"/>
        <end position="142"/>
    </location>
</feature>
<feature type="transmembrane region" description="Helical" evidence="1">
    <location>
        <begin position="143"/>
        <end position="163"/>
    </location>
</feature>
<feature type="topological domain" description="Periplasmic" evidence="1">
    <location>
        <begin position="164"/>
        <end position="398"/>
    </location>
</feature>
<feature type="transmembrane region" description="Helical" evidence="1">
    <location>
        <begin position="399"/>
        <end position="419"/>
    </location>
</feature>
<feature type="topological domain" description="Cytoplasmic" evidence="1">
    <location>
        <begin position="420"/>
        <end position="441"/>
    </location>
</feature>
<feature type="transmembrane region" description="Helical" evidence="1">
    <location>
        <begin position="442"/>
        <end position="462"/>
    </location>
</feature>
<feature type="topological domain" description="Periplasmic" evidence="1">
    <location>
        <begin position="463"/>
        <end position="465"/>
    </location>
</feature>
<feature type="transmembrane region" description="Helical" evidence="1">
    <location>
        <begin position="466"/>
        <end position="486"/>
    </location>
</feature>
<feature type="topological domain" description="Cytoplasmic" evidence="1">
    <location>
        <begin position="487"/>
        <end position="489"/>
    </location>
</feature>
<feature type="transmembrane region" description="Helical" evidence="1">
    <location>
        <begin position="490"/>
        <end position="510"/>
    </location>
</feature>
<feature type="topological domain" description="Periplasmic" evidence="1">
    <location>
        <begin position="511"/>
        <end position="512"/>
    </location>
</feature>
<feature type="transmembrane region" description="Helical" evidence="1">
    <location>
        <begin position="513"/>
        <end position="533"/>
    </location>
</feature>
<feature type="topological domain" description="Cytoplasmic" evidence="1">
    <location>
        <begin position="534"/>
        <end position="717"/>
    </location>
</feature>
<keyword id="KW-0997">Cell inner membrane</keyword>
<keyword id="KW-1003">Cell membrane</keyword>
<keyword id="KW-0472">Membrane</keyword>
<keyword id="KW-1185">Reference proteome</keyword>
<keyword id="KW-0812">Transmembrane</keyword>
<keyword id="KW-1133">Transmembrane helix</keyword>
<dbReference type="EMBL" id="U00096">
    <property type="protein sequence ID" value="AAC74046.2"/>
    <property type="molecule type" value="Genomic_DNA"/>
</dbReference>
<dbReference type="EMBL" id="AP009048">
    <property type="protein sequence ID" value="BAA35718.2"/>
    <property type="molecule type" value="Genomic_DNA"/>
</dbReference>
<dbReference type="PIR" id="G64836">
    <property type="entry name" value="G64836"/>
</dbReference>
<dbReference type="RefSeq" id="NP_415480.2">
    <property type="nucleotide sequence ID" value="NC_000913.3"/>
</dbReference>
<dbReference type="BioGRID" id="4263155">
    <property type="interactions" value="288"/>
</dbReference>
<dbReference type="DIP" id="DIP-11498N"/>
<dbReference type="FunCoup" id="P75870">
    <property type="interactions" value="76"/>
</dbReference>
<dbReference type="IntAct" id="P75870">
    <property type="interactions" value="1"/>
</dbReference>
<dbReference type="STRING" id="511145.b0960"/>
<dbReference type="TCDB" id="2.A.85.1.1">
    <property type="family name" value="the aromatic acid exporter (arae) family"/>
</dbReference>
<dbReference type="PaxDb" id="511145-b0960"/>
<dbReference type="EnsemblBacteria" id="AAC74046">
    <property type="protein sequence ID" value="AAC74046"/>
    <property type="gene ID" value="b0960"/>
</dbReference>
<dbReference type="GeneID" id="947001"/>
<dbReference type="KEGG" id="ecj:JW5128"/>
<dbReference type="KEGG" id="eco:b0960"/>
<dbReference type="KEGG" id="ecoc:C3026_05870"/>
<dbReference type="PATRIC" id="fig|511145.12.peg.994"/>
<dbReference type="EchoBASE" id="EB3485"/>
<dbReference type="eggNOG" id="COG1289">
    <property type="taxonomic scope" value="Bacteria"/>
</dbReference>
<dbReference type="HOGENOM" id="CLU_013315_1_0_6"/>
<dbReference type="InParanoid" id="P75870"/>
<dbReference type="OMA" id="ETDDSWQ"/>
<dbReference type="PhylomeDB" id="P75870"/>
<dbReference type="BioCyc" id="EcoCyc:G6495-MONOMER"/>
<dbReference type="PRO" id="PR:P75870"/>
<dbReference type="Proteomes" id="UP000000625">
    <property type="component" value="Chromosome"/>
</dbReference>
<dbReference type="GO" id="GO:0005886">
    <property type="term" value="C:plasma membrane"/>
    <property type="evidence" value="ECO:0000314"/>
    <property type="project" value="EcoCyc"/>
</dbReference>
<dbReference type="InterPro" id="IPR010019">
    <property type="entry name" value="Integral_membrane_YccS"/>
</dbReference>
<dbReference type="InterPro" id="IPR010020">
    <property type="entry name" value="Integral_membrane_YCCS_YHJK"/>
</dbReference>
<dbReference type="InterPro" id="IPR049453">
    <property type="entry name" value="Memb_transporter_dom"/>
</dbReference>
<dbReference type="InterPro" id="IPR032692">
    <property type="entry name" value="YccS_N"/>
</dbReference>
<dbReference type="NCBIfam" id="TIGR01666">
    <property type="entry name" value="YCCS"/>
    <property type="match status" value="1"/>
</dbReference>
<dbReference type="NCBIfam" id="TIGR01667">
    <property type="entry name" value="YCCS_YHFK"/>
    <property type="match status" value="1"/>
</dbReference>
<dbReference type="PANTHER" id="PTHR30509:SF8">
    <property type="entry name" value="INNER MEMBRANE PROTEIN YCCS"/>
    <property type="match status" value="1"/>
</dbReference>
<dbReference type="PANTHER" id="PTHR30509">
    <property type="entry name" value="P-HYDROXYBENZOIC ACID EFFLUX PUMP SUBUNIT-RELATED"/>
    <property type="match status" value="1"/>
</dbReference>
<dbReference type="Pfam" id="PF12805">
    <property type="entry name" value="FUSC-like"/>
    <property type="match status" value="1"/>
</dbReference>
<dbReference type="Pfam" id="PF13515">
    <property type="entry name" value="FUSC_2"/>
    <property type="match status" value="1"/>
</dbReference>
<organism>
    <name type="scientific">Escherichia coli (strain K12)</name>
    <dbReference type="NCBI Taxonomy" id="83333"/>
    <lineage>
        <taxon>Bacteria</taxon>
        <taxon>Pseudomonadati</taxon>
        <taxon>Pseudomonadota</taxon>
        <taxon>Gammaproteobacteria</taxon>
        <taxon>Enterobacterales</taxon>
        <taxon>Enterobacteriaceae</taxon>
        <taxon>Escherichia</taxon>
    </lineage>
</organism>
<name>YCCS_ECOLI</name>
<proteinExistence type="evidence at protein level"/>
<evidence type="ECO:0000255" key="1"/>
<evidence type="ECO:0000305" key="2"/>
<gene>
    <name type="primary">yccS</name>
    <name type="ordered locus">b0960</name>
    <name type="ordered locus">JW5128</name>
</gene>
<protein>
    <recommendedName>
        <fullName>Inner membrane protein YccS</fullName>
    </recommendedName>
</protein>